<comment type="function">
    <text evidence="1 3">Thiol-specific peroxidase that catalyzes the reduction of hydrogen peroxide and organic hydroperoxides to water and alcohols, respectively (By similarity). Seems to contribute to the inhibition of germination during stress (By similarity).</text>
</comment>
<comment type="catalytic activity">
    <reaction evidence="3">
        <text>a hydroperoxide + [thioredoxin]-dithiol = an alcohol + [thioredoxin]-disulfide + H2O</text>
        <dbReference type="Rhea" id="RHEA:62620"/>
        <dbReference type="Rhea" id="RHEA-COMP:10698"/>
        <dbReference type="Rhea" id="RHEA-COMP:10700"/>
        <dbReference type="ChEBI" id="CHEBI:15377"/>
        <dbReference type="ChEBI" id="CHEBI:29950"/>
        <dbReference type="ChEBI" id="CHEBI:30879"/>
        <dbReference type="ChEBI" id="CHEBI:35924"/>
        <dbReference type="ChEBI" id="CHEBI:50058"/>
        <dbReference type="EC" id="1.11.1.24"/>
    </reaction>
</comment>
<comment type="subcellular location">
    <subcellularLocation>
        <location evidence="1">Nucleus</location>
    </subcellularLocation>
    <subcellularLocation>
        <location evidence="1">Cytoplasm</location>
    </subcellularLocation>
</comment>
<comment type="miscellaneous">
    <text evidence="2">The active site is a conserved redox-active cysteine residue, the peroxidatic cysteine (C(P)), which makes the nucleophilic attack on the peroxide substrate. The peroxide oxidizes the C(P)-SH to cysteine sulfenic acid (C(P)-SOH), which then reacts with another cysteine residue, the resolving cysteine (C(R)), to form a disulfide bridge. The disulfide is subsequently reduced by an appropriate electron donor to complete the catalytic cycle. In this 1-Cys peroxiredoxin, no C(R) is present and C(P) instead forms a disulfide with a cysteine from another protein or with a small thiol molecule.</text>
</comment>
<comment type="similarity">
    <text evidence="6">Belongs to the peroxiredoxin family. Prx6 subfamily.</text>
</comment>
<reference key="1">
    <citation type="submission" date="2004-04" db="EMBL/GenBank/DDBJ databases">
        <title>Expression of 1-Cys peroxiredoxin in relation to desiccation tolerance in seeds of Medicago truncatula.</title>
        <authorList>
            <person name="Boudet J."/>
            <person name="Buitink J."/>
            <person name="Satour P."/>
            <person name="Leprince O.H.L."/>
        </authorList>
    </citation>
    <scope>NUCLEOTIDE SEQUENCE [MRNA]</scope>
    <source>
        <strain>cv. Paraggio</strain>
        <tissue>Embryo</tissue>
    </source>
</reference>
<evidence type="ECO:0000250" key="1">
    <source>
        <dbReference type="UniProtKB" id="O04005"/>
    </source>
</evidence>
<evidence type="ECO:0000250" key="2">
    <source>
        <dbReference type="UniProtKB" id="O35244"/>
    </source>
</evidence>
<evidence type="ECO:0000250" key="3">
    <source>
        <dbReference type="UniProtKB" id="P30041"/>
    </source>
</evidence>
<evidence type="ECO:0000255" key="4"/>
<evidence type="ECO:0000255" key="5">
    <source>
        <dbReference type="PROSITE-ProRule" id="PRU00691"/>
    </source>
</evidence>
<evidence type="ECO:0000305" key="6"/>
<protein>
    <recommendedName>
        <fullName>1-Cys peroxiredoxin</fullName>
        <ecNumber evidence="3">1.11.1.24</ecNumber>
    </recommendedName>
    <alternativeName>
        <fullName>Rehydrin homolog</fullName>
    </alternativeName>
    <alternativeName>
        <fullName>Thioredoxin peroxidase</fullName>
    </alternativeName>
    <alternativeName>
        <fullName evidence="6">Thioredoxin-dependent peroxiredoxin</fullName>
    </alternativeName>
</protein>
<feature type="chain" id="PRO_0000285102" description="1-Cys peroxiredoxin">
    <location>
        <begin position="1"/>
        <end position="218"/>
    </location>
</feature>
<feature type="domain" description="Thioredoxin" evidence="5">
    <location>
        <begin position="4"/>
        <end position="164"/>
    </location>
</feature>
<feature type="short sequence motif" description="Bipartite nuclear localization signal" evidence="4">
    <location>
        <begin position="194"/>
        <end position="217"/>
    </location>
</feature>
<feature type="active site" description="Cysteine sulfenic acid (-SOH) intermediate" evidence="3">
    <location>
        <position position="46"/>
    </location>
</feature>
<proteinExistence type="evidence at transcript level"/>
<sequence length="218" mass="24414">MPGLTIGDTIPDLEVDTTQGKIKLHHFCSDSWTILFSHPGDFTPVCTTELGKMAQYASEFNKRGVMLLGMSCDDLESHKEWIKDIEAHTPGAKVNYPIISDPKREIIKQLNMVDPDEKDSNGNLPSRALHIVGPDKKIKLSFLYPAQTGRNMDEVLRVVESLQKASKYKIATPANWKPGEPVVISPDVTNDQAKEMFPQGFKTADLPSKKEYLRFTNV</sequence>
<dbReference type="EC" id="1.11.1.24" evidence="3"/>
<dbReference type="EMBL" id="AY594329">
    <property type="protein sequence ID" value="AAT67997.1"/>
    <property type="molecule type" value="mRNA"/>
</dbReference>
<dbReference type="SMR" id="Q6E2Z6"/>
<dbReference type="PeroxiBase" id="4377">
    <property type="entry name" value="Mt1CysPrx01"/>
</dbReference>
<dbReference type="ExpressionAtlas" id="Q6E2Z6">
    <property type="expression patterns" value="differential"/>
</dbReference>
<dbReference type="GO" id="GO:0005737">
    <property type="term" value="C:cytoplasm"/>
    <property type="evidence" value="ECO:0007669"/>
    <property type="project" value="UniProtKB-SubCell"/>
</dbReference>
<dbReference type="GO" id="GO:0005634">
    <property type="term" value="C:nucleus"/>
    <property type="evidence" value="ECO:0007669"/>
    <property type="project" value="UniProtKB-SubCell"/>
</dbReference>
<dbReference type="GO" id="GO:0140824">
    <property type="term" value="F:thioredoxin-dependent peroxiredoxin activity"/>
    <property type="evidence" value="ECO:0007669"/>
    <property type="project" value="UniProtKB-EC"/>
</dbReference>
<dbReference type="CDD" id="cd03016">
    <property type="entry name" value="PRX_1cys"/>
    <property type="match status" value="1"/>
</dbReference>
<dbReference type="FunFam" id="3.30.1020.10:FF:000001">
    <property type="entry name" value="1-Cys peroxiredoxin"/>
    <property type="match status" value="1"/>
</dbReference>
<dbReference type="FunFam" id="3.40.30.10:FF:000011">
    <property type="entry name" value="Peroxiredoxin PRX1"/>
    <property type="match status" value="1"/>
</dbReference>
<dbReference type="Gene3D" id="3.30.1020.10">
    <property type="entry name" value="Antioxidant, Horf6, Chain A, domain2"/>
    <property type="match status" value="1"/>
</dbReference>
<dbReference type="Gene3D" id="3.40.30.10">
    <property type="entry name" value="Glutaredoxin"/>
    <property type="match status" value="1"/>
</dbReference>
<dbReference type="InterPro" id="IPR000866">
    <property type="entry name" value="AhpC/TSA"/>
</dbReference>
<dbReference type="InterPro" id="IPR024706">
    <property type="entry name" value="Peroxiredoxin_AhpC-typ"/>
</dbReference>
<dbReference type="InterPro" id="IPR019479">
    <property type="entry name" value="Peroxiredoxin_C"/>
</dbReference>
<dbReference type="InterPro" id="IPR045020">
    <property type="entry name" value="PRX_1cys"/>
</dbReference>
<dbReference type="InterPro" id="IPR036249">
    <property type="entry name" value="Thioredoxin-like_sf"/>
</dbReference>
<dbReference type="InterPro" id="IPR013766">
    <property type="entry name" value="Thioredoxin_domain"/>
</dbReference>
<dbReference type="PANTHER" id="PTHR43503">
    <property type="entry name" value="MCG48959-RELATED"/>
    <property type="match status" value="1"/>
</dbReference>
<dbReference type="PANTHER" id="PTHR43503:SF4">
    <property type="entry name" value="PEROXIREDOXIN-6"/>
    <property type="match status" value="1"/>
</dbReference>
<dbReference type="Pfam" id="PF10417">
    <property type="entry name" value="1-cysPrx_C"/>
    <property type="match status" value="1"/>
</dbReference>
<dbReference type="Pfam" id="PF00578">
    <property type="entry name" value="AhpC-TSA"/>
    <property type="match status" value="1"/>
</dbReference>
<dbReference type="PIRSF" id="PIRSF000239">
    <property type="entry name" value="AHPC"/>
    <property type="match status" value="1"/>
</dbReference>
<dbReference type="SUPFAM" id="SSF52833">
    <property type="entry name" value="Thioredoxin-like"/>
    <property type="match status" value="1"/>
</dbReference>
<dbReference type="PROSITE" id="PS51352">
    <property type="entry name" value="THIOREDOXIN_2"/>
    <property type="match status" value="1"/>
</dbReference>
<name>REHY_MEDTR</name>
<keyword id="KW-0049">Antioxidant</keyword>
<keyword id="KW-0963">Cytoplasm</keyword>
<keyword id="KW-0539">Nucleus</keyword>
<keyword id="KW-0560">Oxidoreductase</keyword>
<keyword id="KW-0575">Peroxidase</keyword>
<keyword id="KW-0676">Redox-active center</keyword>
<organism>
    <name type="scientific">Medicago truncatula</name>
    <name type="common">Barrel medic</name>
    <name type="synonym">Medicago tribuloides</name>
    <dbReference type="NCBI Taxonomy" id="3880"/>
    <lineage>
        <taxon>Eukaryota</taxon>
        <taxon>Viridiplantae</taxon>
        <taxon>Streptophyta</taxon>
        <taxon>Embryophyta</taxon>
        <taxon>Tracheophyta</taxon>
        <taxon>Spermatophyta</taxon>
        <taxon>Magnoliopsida</taxon>
        <taxon>eudicotyledons</taxon>
        <taxon>Gunneridae</taxon>
        <taxon>Pentapetalae</taxon>
        <taxon>rosids</taxon>
        <taxon>fabids</taxon>
        <taxon>Fabales</taxon>
        <taxon>Fabaceae</taxon>
        <taxon>Papilionoideae</taxon>
        <taxon>50 kb inversion clade</taxon>
        <taxon>NPAAA clade</taxon>
        <taxon>Hologalegina</taxon>
        <taxon>IRL clade</taxon>
        <taxon>Trifolieae</taxon>
        <taxon>Medicago</taxon>
    </lineage>
</organism>
<accession>Q6E2Z6</accession>